<sequence length="470" mass="50667">MTATRLPDGFAVQVDRRVRVLGDGSALLGGSPTRLLRLAPAARGLLCDGRLKVRDEVSAELARILLDATVAHPRPPSGPSHRDVTVVIPVRNNASGLRRLVTSLRGLRVIVVDDGSACPVESDDFVGAHCDIEVLHHPHSKGPAAARNTGLAACTTDFVAFLDSDVTPRRGWLESLLGHFCDPTVALVAPRIVSLVEGENPVARYEALHSSLDLGQREAPVLPHSTVSYVPSAAIVCRSSAIRDVGGFDETMHSGEDVDLCWRLIEAGARLRYEPIALVAHDHRTQLRDWIARKAFYGGSAAPLAVRHPDKTAPLVISGGALMAWILMSIGTGLGRLASLVIAVLTGRRIARAMRCAETSFLDVLAVATRGLWAAALQLASAICRHYWPLALLAAILSRRCRRVVLIAAVVDGVVDWLRRREGADDDAEPIGPLTYLVLKRVDDLAYGAGLWYGVVRERNIGALKPQIRT</sequence>
<organism>
    <name type="scientific">Mycobacterium tuberculosis (strain ATCC 25618 / H37Rv)</name>
    <dbReference type="NCBI Taxonomy" id="83332"/>
    <lineage>
        <taxon>Bacteria</taxon>
        <taxon>Bacillati</taxon>
        <taxon>Actinomycetota</taxon>
        <taxon>Actinomycetes</taxon>
        <taxon>Mycobacteriales</taxon>
        <taxon>Mycobacteriaceae</taxon>
        <taxon>Mycobacterium</taxon>
        <taxon>Mycobacterium tuberculosis complex</taxon>
    </lineage>
</organism>
<protein>
    <recommendedName>
        <fullName>Pre-mycofactocin glycosyltransferase</fullName>
        <ecNumber evidence="1">2.4.1.-</ecNumber>
    </recommendedName>
</protein>
<feature type="chain" id="PRO_0000415278" description="Pre-mycofactocin glycosyltransferase">
    <location>
        <begin position="1"/>
        <end position="470"/>
    </location>
</feature>
<feature type="transmembrane region" description="Helical" evidence="2">
    <location>
        <begin position="315"/>
        <end position="335"/>
    </location>
</feature>
<reference key="1">
    <citation type="journal article" date="1998" name="Nature">
        <title>Deciphering the biology of Mycobacterium tuberculosis from the complete genome sequence.</title>
        <authorList>
            <person name="Cole S.T."/>
            <person name="Brosch R."/>
            <person name="Parkhill J."/>
            <person name="Garnier T."/>
            <person name="Churcher C.M."/>
            <person name="Harris D.E."/>
            <person name="Gordon S.V."/>
            <person name="Eiglmeier K."/>
            <person name="Gas S."/>
            <person name="Barry C.E. III"/>
            <person name="Tekaia F."/>
            <person name="Badcock K."/>
            <person name="Basham D."/>
            <person name="Brown D."/>
            <person name="Chillingworth T."/>
            <person name="Connor R."/>
            <person name="Davies R.M."/>
            <person name="Devlin K."/>
            <person name="Feltwell T."/>
            <person name="Gentles S."/>
            <person name="Hamlin N."/>
            <person name="Holroyd S."/>
            <person name="Hornsby T."/>
            <person name="Jagels K."/>
            <person name="Krogh A."/>
            <person name="McLean J."/>
            <person name="Moule S."/>
            <person name="Murphy L.D."/>
            <person name="Oliver S."/>
            <person name="Osborne J."/>
            <person name="Quail M.A."/>
            <person name="Rajandream M.A."/>
            <person name="Rogers J."/>
            <person name="Rutter S."/>
            <person name="Seeger K."/>
            <person name="Skelton S."/>
            <person name="Squares S."/>
            <person name="Squares R."/>
            <person name="Sulston J.E."/>
            <person name="Taylor K."/>
            <person name="Whitehead S."/>
            <person name="Barrell B.G."/>
        </authorList>
    </citation>
    <scope>NUCLEOTIDE SEQUENCE [LARGE SCALE GENOMIC DNA]</scope>
    <source>
        <strain>ATCC 25618 / H37Rv</strain>
    </source>
</reference>
<reference key="2">
    <citation type="journal article" date="2011" name="BMC Genomics">
        <title>Bioinformatic evidence for a widely distributed, ribosomally produced electron carrier precursor, its maturation proteins, and its nicotinoprotein redox partners.</title>
        <authorList>
            <person name="Haft D.H."/>
        </authorList>
    </citation>
    <scope>POSSIBLE FUNCTION</scope>
    <source>
        <strain>ATCC 25618 / H37Rv</strain>
    </source>
</reference>
<reference key="3">
    <citation type="journal article" date="2011" name="Mol. Cell. Proteomics">
        <title>Proteogenomic analysis of Mycobacterium tuberculosis by high resolution mass spectrometry.</title>
        <authorList>
            <person name="Kelkar D.S."/>
            <person name="Kumar D."/>
            <person name="Kumar P."/>
            <person name="Balakrishnan L."/>
            <person name="Muthusamy B."/>
            <person name="Yadav A.K."/>
            <person name="Shrivastava P."/>
            <person name="Marimuthu A."/>
            <person name="Anand S."/>
            <person name="Sundaram H."/>
            <person name="Kingsbury R."/>
            <person name="Harsha H.C."/>
            <person name="Nair B."/>
            <person name="Prasad T.S."/>
            <person name="Chauhan D.S."/>
            <person name="Katoch K."/>
            <person name="Katoch V.M."/>
            <person name="Kumar P."/>
            <person name="Chaerkady R."/>
            <person name="Ramachandran S."/>
            <person name="Dash D."/>
            <person name="Pandey A."/>
        </authorList>
    </citation>
    <scope>IDENTIFICATION BY MASS SPECTROMETRY [LARGE SCALE ANALYSIS]</scope>
    <source>
        <strain>ATCC 25618 / H37Rv</strain>
    </source>
</reference>
<keyword id="KW-1003">Cell membrane</keyword>
<keyword id="KW-0328">Glycosyltransferase</keyword>
<keyword id="KW-0472">Membrane</keyword>
<keyword id="KW-1185">Reference proteome</keyword>
<keyword id="KW-0808">Transferase</keyword>
<keyword id="KW-0812">Transmembrane</keyword>
<keyword id="KW-1133">Transmembrane helix</keyword>
<name>MFTF_MYCTU</name>
<accession>P9WMX1</accession>
<accession>L0T4G0</accession>
<accession>P95042</accession>
<accession>Q7D9E7</accession>
<comment type="function">
    <text evidence="1">Involved in the biosynthesis of the enzyme cofactor mycofactocin (MFT). Acts as a glycosyltransferase that catalyzes the oligoglycosylation of pre-mycofactocin (PMFT), adding up to nine beta-1,4-linked glucose residues.</text>
</comment>
<comment type="subcellular location">
    <subcellularLocation>
        <location evidence="2">Cell membrane</location>
        <topology evidence="2">Single-pass membrane protein</topology>
    </subcellularLocation>
</comment>
<comment type="similarity">
    <text evidence="4">Belongs to the glycosyltransferase 2 family.</text>
</comment>
<dbReference type="EC" id="2.4.1.-" evidence="1"/>
<dbReference type="EMBL" id="AL123456">
    <property type="protein sequence ID" value="CCP43440.1"/>
    <property type="molecule type" value="Genomic_DNA"/>
</dbReference>
<dbReference type="PIR" id="C70641">
    <property type="entry name" value="C70641"/>
</dbReference>
<dbReference type="RefSeq" id="NP_215210.1">
    <property type="nucleotide sequence ID" value="NC_000962.3"/>
</dbReference>
<dbReference type="RefSeq" id="WP_003403501.1">
    <property type="nucleotide sequence ID" value="NZ_NVQJ01000007.1"/>
</dbReference>
<dbReference type="SMR" id="P9WMX1"/>
<dbReference type="STRING" id="83332.Rv0696"/>
<dbReference type="PaxDb" id="83332-Rv0696"/>
<dbReference type="DNASU" id="888307"/>
<dbReference type="GeneID" id="888307"/>
<dbReference type="KEGG" id="mtu:Rv0696"/>
<dbReference type="KEGG" id="mtv:RVBD_0696"/>
<dbReference type="TubercuList" id="Rv0696"/>
<dbReference type="eggNOG" id="COG1216">
    <property type="taxonomic scope" value="Bacteria"/>
</dbReference>
<dbReference type="InParanoid" id="P9WMX1"/>
<dbReference type="OrthoDB" id="5243838at2"/>
<dbReference type="PhylomeDB" id="P9WMX1"/>
<dbReference type="Proteomes" id="UP000001584">
    <property type="component" value="Chromosome"/>
</dbReference>
<dbReference type="GO" id="GO:0005829">
    <property type="term" value="C:cytosol"/>
    <property type="evidence" value="ECO:0007005"/>
    <property type="project" value="MTBBASE"/>
</dbReference>
<dbReference type="GO" id="GO:0005886">
    <property type="term" value="C:plasma membrane"/>
    <property type="evidence" value="ECO:0007669"/>
    <property type="project" value="UniProtKB-SubCell"/>
</dbReference>
<dbReference type="GO" id="GO:0016757">
    <property type="term" value="F:glycosyltransferase activity"/>
    <property type="evidence" value="ECO:0007669"/>
    <property type="project" value="UniProtKB-KW"/>
</dbReference>
<dbReference type="Gene3D" id="3.90.550.10">
    <property type="entry name" value="Spore Coat Polysaccharide Biosynthesis Protein SpsA, Chain A"/>
    <property type="match status" value="1"/>
</dbReference>
<dbReference type="InterPro" id="IPR001173">
    <property type="entry name" value="Glyco_trans_2-like"/>
</dbReference>
<dbReference type="InterPro" id="IPR023981">
    <property type="entry name" value="MftF"/>
</dbReference>
<dbReference type="InterPro" id="IPR029044">
    <property type="entry name" value="Nucleotide-diphossugar_trans"/>
</dbReference>
<dbReference type="NCBIfam" id="TIGR03965">
    <property type="entry name" value="mycofact_glyco"/>
    <property type="match status" value="1"/>
</dbReference>
<dbReference type="PANTHER" id="PTHR43646">
    <property type="entry name" value="GLYCOSYLTRANSFERASE"/>
    <property type="match status" value="1"/>
</dbReference>
<dbReference type="PANTHER" id="PTHR43646:SF6">
    <property type="entry name" value="PRE-MYCOFACTOCIN GLYCOSYLTRANSFERASE"/>
    <property type="match status" value="1"/>
</dbReference>
<dbReference type="Pfam" id="PF00535">
    <property type="entry name" value="Glycos_transf_2"/>
    <property type="match status" value="1"/>
</dbReference>
<dbReference type="SUPFAM" id="SSF53448">
    <property type="entry name" value="Nucleotide-diphospho-sugar transferases"/>
    <property type="match status" value="1"/>
</dbReference>
<proteinExistence type="evidence at protein level"/>
<gene>
    <name evidence="3" type="primary">mftF</name>
    <name type="ordered locus">Rv0696</name>
</gene>
<evidence type="ECO:0000250" key="1">
    <source>
        <dbReference type="UniProtKB" id="A0QSC1"/>
    </source>
</evidence>
<evidence type="ECO:0000255" key="2"/>
<evidence type="ECO:0000303" key="3">
    <source>
    </source>
</evidence>
<evidence type="ECO:0000305" key="4"/>